<keyword id="KW-0002">3D-structure</keyword>
<keyword id="KW-0489">Methyltransferase</keyword>
<keyword id="KW-1185">Reference proteome</keyword>
<keyword id="KW-0949">S-adenosyl-L-methionine</keyword>
<keyword id="KW-0808">Transferase</keyword>
<keyword id="KW-0819">tRNA processing</keyword>
<sequence>MRMRHKPWADDFLAENADIAISNPADYKGKWNTVFGNDNPIHIEVGTGKGQFISGMAKQNPDINYIGIELFKSVIVTAVQKVKDSEAQNVKLLNIDADTLTDVFEPGEVKRVYLNFSDPWPKKRHEKRRLTYSHFLKKYEEVMGKGGSIHFKTDNRGLFEYSLKSFSEYGLLLTYVSLDLHNSNLEGNIMTEYEEKFSALGQPIYRAEVEWRT</sequence>
<organism>
    <name type="scientific">Bacillus subtilis (strain 168)</name>
    <dbReference type="NCBI Taxonomy" id="224308"/>
    <lineage>
        <taxon>Bacteria</taxon>
        <taxon>Bacillati</taxon>
        <taxon>Bacillota</taxon>
        <taxon>Bacilli</taxon>
        <taxon>Bacillales</taxon>
        <taxon>Bacillaceae</taxon>
        <taxon>Bacillus</taxon>
    </lineage>
</organism>
<dbReference type="EC" id="2.1.1.33" evidence="2 3"/>
<dbReference type="EMBL" id="AF008220">
    <property type="protein sequence ID" value="AAC00285.1"/>
    <property type="molecule type" value="Genomic_DNA"/>
</dbReference>
<dbReference type="EMBL" id="AL009126">
    <property type="protein sequence ID" value="CAB14968.1"/>
    <property type="molecule type" value="Genomic_DNA"/>
</dbReference>
<dbReference type="PIR" id="B69997">
    <property type="entry name" value="B69997"/>
</dbReference>
<dbReference type="RefSeq" id="NP_390868.1">
    <property type="nucleotide sequence ID" value="NC_000964.3"/>
</dbReference>
<dbReference type="RefSeq" id="WP_004398646.1">
    <property type="nucleotide sequence ID" value="NZ_OZ025638.1"/>
</dbReference>
<dbReference type="PDB" id="2FCA">
    <property type="method" value="X-ray"/>
    <property type="resolution" value="2.10 A"/>
    <property type="chains" value="A/B=1-213"/>
</dbReference>
<dbReference type="PDB" id="7NYB">
    <property type="method" value="X-ray"/>
    <property type="resolution" value="2.50 A"/>
    <property type="chains" value="A/B=1-213"/>
</dbReference>
<dbReference type="PDB" id="7NZI">
    <property type="method" value="X-ray"/>
    <property type="resolution" value="3.10 A"/>
    <property type="chains" value="A/B=1-213"/>
</dbReference>
<dbReference type="PDB" id="7NZJ">
    <property type="method" value="X-ray"/>
    <property type="resolution" value="1.98 A"/>
    <property type="chains" value="A/B/C/D/E/F=1-213"/>
</dbReference>
<dbReference type="PDBsum" id="2FCA"/>
<dbReference type="PDBsum" id="7NYB"/>
<dbReference type="PDBsum" id="7NZI"/>
<dbReference type="PDBsum" id="7NZJ"/>
<dbReference type="SMR" id="O34522"/>
<dbReference type="FunCoup" id="O34522">
    <property type="interactions" value="486"/>
</dbReference>
<dbReference type="STRING" id="224308.BSU29900"/>
<dbReference type="PaxDb" id="224308-BSU29900"/>
<dbReference type="EnsemblBacteria" id="CAB14968">
    <property type="protein sequence ID" value="CAB14968"/>
    <property type="gene ID" value="BSU_29900"/>
</dbReference>
<dbReference type="GeneID" id="936447"/>
<dbReference type="KEGG" id="bsu:BSU29900"/>
<dbReference type="PATRIC" id="fig|224308.179.peg.3248"/>
<dbReference type="eggNOG" id="COG0220">
    <property type="taxonomic scope" value="Bacteria"/>
</dbReference>
<dbReference type="InParanoid" id="O34522"/>
<dbReference type="OrthoDB" id="9802090at2"/>
<dbReference type="PhylomeDB" id="O34522"/>
<dbReference type="BioCyc" id="BSUB:BSU29900-MONOMER"/>
<dbReference type="BRENDA" id="2.1.1.33">
    <property type="organism ID" value="658"/>
</dbReference>
<dbReference type="UniPathway" id="UPA00989"/>
<dbReference type="EvolutionaryTrace" id="O34522"/>
<dbReference type="Proteomes" id="UP000001570">
    <property type="component" value="Chromosome"/>
</dbReference>
<dbReference type="GO" id="GO:0043527">
    <property type="term" value="C:tRNA methyltransferase complex"/>
    <property type="evidence" value="ECO:0000318"/>
    <property type="project" value="GO_Central"/>
</dbReference>
<dbReference type="GO" id="GO:0008176">
    <property type="term" value="F:tRNA (guanine(46)-N7)-methyltransferase activity"/>
    <property type="evidence" value="ECO:0000318"/>
    <property type="project" value="GO_Central"/>
</dbReference>
<dbReference type="GO" id="GO:0036265">
    <property type="term" value="P:RNA (guanine-N7)-methylation"/>
    <property type="evidence" value="ECO:0000318"/>
    <property type="project" value="GO_Central"/>
</dbReference>
<dbReference type="GO" id="GO:0030488">
    <property type="term" value="P:tRNA methylation"/>
    <property type="evidence" value="ECO:0000318"/>
    <property type="project" value="GO_Central"/>
</dbReference>
<dbReference type="CDD" id="cd02440">
    <property type="entry name" value="AdoMet_MTases"/>
    <property type="match status" value="1"/>
</dbReference>
<dbReference type="FunFam" id="3.40.50.150:FF:000035">
    <property type="entry name" value="tRNA (guanine-N(7)-)-methyltransferase"/>
    <property type="match status" value="1"/>
</dbReference>
<dbReference type="Gene3D" id="3.40.50.150">
    <property type="entry name" value="Vaccinia Virus protein VP39"/>
    <property type="match status" value="1"/>
</dbReference>
<dbReference type="HAMAP" id="MF_01057">
    <property type="entry name" value="tRNA_methyltr_TrmB"/>
    <property type="match status" value="1"/>
</dbReference>
<dbReference type="InterPro" id="IPR029063">
    <property type="entry name" value="SAM-dependent_MTases_sf"/>
</dbReference>
<dbReference type="InterPro" id="IPR003358">
    <property type="entry name" value="tRNA_(Gua-N-7)_MeTrfase_Trmb"/>
</dbReference>
<dbReference type="InterPro" id="IPR055361">
    <property type="entry name" value="tRNA_methyltr_TrmB_bact"/>
</dbReference>
<dbReference type="NCBIfam" id="NF001080">
    <property type="entry name" value="PRK00121.2-2"/>
    <property type="match status" value="1"/>
</dbReference>
<dbReference type="NCBIfam" id="TIGR00091">
    <property type="entry name" value="tRNA (guanosine(46)-N7)-methyltransferase TrmB"/>
    <property type="match status" value="1"/>
</dbReference>
<dbReference type="PANTHER" id="PTHR23417">
    <property type="entry name" value="3-DEOXY-D-MANNO-OCTULOSONIC-ACID TRANSFERASE/TRNA GUANINE-N 7 - -METHYLTRANSFERASE"/>
    <property type="match status" value="1"/>
</dbReference>
<dbReference type="PANTHER" id="PTHR23417:SF14">
    <property type="entry name" value="PENTACOTRIPEPTIDE-REPEAT REGION OF PRORP DOMAIN-CONTAINING PROTEIN"/>
    <property type="match status" value="1"/>
</dbReference>
<dbReference type="Pfam" id="PF02390">
    <property type="entry name" value="Methyltransf_4"/>
    <property type="match status" value="1"/>
</dbReference>
<dbReference type="SUPFAM" id="SSF53335">
    <property type="entry name" value="S-adenosyl-L-methionine-dependent methyltransferases"/>
    <property type="match status" value="1"/>
</dbReference>
<dbReference type="PROSITE" id="PS51625">
    <property type="entry name" value="SAM_MT_TRMB"/>
    <property type="match status" value="1"/>
</dbReference>
<accession>O34522</accession>
<evidence type="ECO:0000250" key="1">
    <source>
        <dbReference type="UniProtKB" id="Q12009"/>
    </source>
</evidence>
<evidence type="ECO:0000255" key="2">
    <source>
        <dbReference type="HAMAP-Rule" id="MF_01057"/>
    </source>
</evidence>
<evidence type="ECO:0000269" key="3">
    <source>
    </source>
</evidence>
<evidence type="ECO:0000303" key="4">
    <source>
    </source>
</evidence>
<evidence type="ECO:0000305" key="5"/>
<evidence type="ECO:0000305" key="6">
    <source>
    </source>
</evidence>
<evidence type="ECO:0007829" key="7">
    <source>
        <dbReference type="PDB" id="7NZI"/>
    </source>
</evidence>
<evidence type="ECO:0007829" key="8">
    <source>
        <dbReference type="PDB" id="7NZJ"/>
    </source>
</evidence>
<name>TRMB_BACSU</name>
<proteinExistence type="evidence at protein level"/>
<gene>
    <name evidence="2 4" type="primary">trmB</name>
    <name type="synonym">ytmQ</name>
    <name type="ordered locus">BSU29900</name>
</gene>
<feature type="chain" id="PRO_0000171295" description="tRNA (guanine-N(7)-)-methyltransferase">
    <location>
        <begin position="1"/>
        <end position="213"/>
    </location>
</feature>
<feature type="region of interest" description="Interaction with RNA" evidence="2">
    <location>
        <begin position="124"/>
        <end position="129"/>
    </location>
</feature>
<feature type="active site" evidence="1">
    <location>
        <position position="118"/>
    </location>
</feature>
<feature type="binding site" evidence="2">
    <location>
        <position position="44"/>
    </location>
    <ligand>
        <name>S-adenosyl-L-methionine</name>
        <dbReference type="ChEBI" id="CHEBI:59789"/>
    </ligand>
</feature>
<feature type="binding site" evidence="2">
    <location>
        <position position="69"/>
    </location>
    <ligand>
        <name>S-adenosyl-L-methionine</name>
        <dbReference type="ChEBI" id="CHEBI:59789"/>
    </ligand>
</feature>
<feature type="binding site" evidence="2">
    <location>
        <position position="96"/>
    </location>
    <ligand>
        <name>S-adenosyl-L-methionine</name>
        <dbReference type="ChEBI" id="CHEBI:59789"/>
    </ligand>
</feature>
<feature type="binding site" evidence="2">
    <location>
        <position position="118"/>
    </location>
    <ligand>
        <name>S-adenosyl-L-methionine</name>
        <dbReference type="ChEBI" id="CHEBI:59789"/>
    </ligand>
</feature>
<feature type="binding site" evidence="2">
    <location>
        <position position="122"/>
    </location>
    <ligand>
        <name>substrate</name>
    </ligand>
</feature>
<feature type="binding site" evidence="2">
    <location>
        <position position="154"/>
    </location>
    <ligand>
        <name>substrate</name>
    </ligand>
</feature>
<feature type="binding site" evidence="2">
    <location>
        <begin position="191"/>
        <end position="194"/>
    </location>
    <ligand>
        <name>substrate</name>
    </ligand>
</feature>
<feature type="helix" evidence="8">
    <location>
        <begin position="9"/>
        <end position="15"/>
    </location>
</feature>
<feature type="turn" evidence="8">
    <location>
        <begin position="16"/>
        <end position="19"/>
    </location>
</feature>
<feature type="helix" evidence="8">
    <location>
        <begin position="24"/>
        <end position="27"/>
    </location>
</feature>
<feature type="helix" evidence="8">
    <location>
        <begin position="31"/>
        <end position="35"/>
    </location>
</feature>
<feature type="strand" evidence="8">
    <location>
        <begin position="41"/>
        <end position="45"/>
    </location>
</feature>
<feature type="strand" evidence="7">
    <location>
        <begin position="48"/>
        <end position="50"/>
    </location>
</feature>
<feature type="helix" evidence="8">
    <location>
        <begin position="51"/>
        <end position="59"/>
    </location>
</feature>
<feature type="strand" evidence="8">
    <location>
        <begin position="63"/>
        <end position="68"/>
    </location>
</feature>
<feature type="helix" evidence="8">
    <location>
        <begin position="72"/>
        <end position="85"/>
    </location>
</feature>
<feature type="strand" evidence="8">
    <location>
        <begin position="88"/>
        <end position="93"/>
    </location>
</feature>
<feature type="helix" evidence="8">
    <location>
        <begin position="97"/>
        <end position="99"/>
    </location>
</feature>
<feature type="helix" evidence="8">
    <location>
        <begin position="100"/>
        <end position="103"/>
    </location>
</feature>
<feature type="strand" evidence="8">
    <location>
        <begin position="111"/>
        <end position="116"/>
    </location>
</feature>
<feature type="helix" evidence="8">
    <location>
        <begin position="123"/>
        <end position="128"/>
    </location>
</feature>
<feature type="helix" evidence="8">
    <location>
        <begin position="133"/>
        <end position="143"/>
    </location>
</feature>
<feature type="strand" evidence="8">
    <location>
        <begin position="148"/>
        <end position="154"/>
    </location>
</feature>
<feature type="helix" evidence="8">
    <location>
        <begin position="156"/>
        <end position="169"/>
    </location>
</feature>
<feature type="strand" evidence="8">
    <location>
        <begin position="172"/>
        <end position="179"/>
    </location>
</feature>
<feature type="helix" evidence="8">
    <location>
        <begin position="180"/>
        <end position="182"/>
    </location>
</feature>
<feature type="helix" evidence="8">
    <location>
        <begin position="192"/>
        <end position="195"/>
    </location>
</feature>
<feature type="turn" evidence="8">
    <location>
        <begin position="196"/>
        <end position="200"/>
    </location>
</feature>
<feature type="strand" evidence="8">
    <location>
        <begin position="205"/>
        <end position="210"/>
    </location>
</feature>
<comment type="function">
    <text evidence="2 3">Catalyzes the formation of N(7)-methylguanine at position 46 (m7G46) in tRNA.</text>
</comment>
<comment type="catalytic activity">
    <reaction evidence="2 3">
        <text>guanosine(46) in tRNA + S-adenosyl-L-methionine = N(7)-methylguanosine(46) in tRNA + S-adenosyl-L-homocysteine</text>
        <dbReference type="Rhea" id="RHEA:42708"/>
        <dbReference type="Rhea" id="RHEA-COMP:10188"/>
        <dbReference type="Rhea" id="RHEA-COMP:10189"/>
        <dbReference type="ChEBI" id="CHEBI:57856"/>
        <dbReference type="ChEBI" id="CHEBI:59789"/>
        <dbReference type="ChEBI" id="CHEBI:74269"/>
        <dbReference type="ChEBI" id="CHEBI:74480"/>
        <dbReference type="EC" id="2.1.1.33"/>
    </reaction>
</comment>
<comment type="pathway">
    <text evidence="2 6">tRNA modification; N(7)-methylguanine-tRNA biosynthesis.</text>
</comment>
<comment type="subunit">
    <text evidence="3">Homodimer.</text>
</comment>
<comment type="similarity">
    <text evidence="2 5">Belongs to the class I-like SAM-binding methyltransferase superfamily. TrmB family.</text>
</comment>
<protein>
    <recommendedName>
        <fullName evidence="2">tRNA (guanine-N(7)-)-methyltransferase</fullName>
        <ecNumber evidence="2 3">2.1.1.33</ecNumber>
    </recommendedName>
    <alternativeName>
        <fullName evidence="4">BsTrmB</fullName>
    </alternativeName>
    <alternativeName>
        <fullName evidence="2">tRNA (guanine(46)-N(7))-methyltransferase</fullName>
    </alternativeName>
    <alternativeName>
        <fullName evidence="2 4">tRNA(m7G46)-methyltransferase</fullName>
    </alternativeName>
</protein>
<reference key="1">
    <citation type="journal article" date="1997" name="Microbiology">
        <title>Sequencing and functional annotation of the Bacillus subtilis genes in the 200 kb rrnB-dnaB region.</title>
        <authorList>
            <person name="Lapidus A."/>
            <person name="Galleron N."/>
            <person name="Sorokin A."/>
            <person name="Ehrlich S.D."/>
        </authorList>
    </citation>
    <scope>NUCLEOTIDE SEQUENCE [GENOMIC DNA]</scope>
    <source>
        <strain>168</strain>
    </source>
</reference>
<reference key="2">
    <citation type="journal article" date="1997" name="Nature">
        <title>The complete genome sequence of the Gram-positive bacterium Bacillus subtilis.</title>
        <authorList>
            <person name="Kunst F."/>
            <person name="Ogasawara N."/>
            <person name="Moszer I."/>
            <person name="Albertini A.M."/>
            <person name="Alloni G."/>
            <person name="Azevedo V."/>
            <person name="Bertero M.G."/>
            <person name="Bessieres P."/>
            <person name="Bolotin A."/>
            <person name="Borchert S."/>
            <person name="Borriss R."/>
            <person name="Boursier L."/>
            <person name="Brans A."/>
            <person name="Braun M."/>
            <person name="Brignell S.C."/>
            <person name="Bron S."/>
            <person name="Brouillet S."/>
            <person name="Bruschi C.V."/>
            <person name="Caldwell B."/>
            <person name="Capuano V."/>
            <person name="Carter N.M."/>
            <person name="Choi S.-K."/>
            <person name="Codani J.-J."/>
            <person name="Connerton I.F."/>
            <person name="Cummings N.J."/>
            <person name="Daniel R.A."/>
            <person name="Denizot F."/>
            <person name="Devine K.M."/>
            <person name="Duesterhoeft A."/>
            <person name="Ehrlich S.D."/>
            <person name="Emmerson P.T."/>
            <person name="Entian K.-D."/>
            <person name="Errington J."/>
            <person name="Fabret C."/>
            <person name="Ferrari E."/>
            <person name="Foulger D."/>
            <person name="Fritz C."/>
            <person name="Fujita M."/>
            <person name="Fujita Y."/>
            <person name="Fuma S."/>
            <person name="Galizzi A."/>
            <person name="Galleron N."/>
            <person name="Ghim S.-Y."/>
            <person name="Glaser P."/>
            <person name="Goffeau A."/>
            <person name="Golightly E.J."/>
            <person name="Grandi G."/>
            <person name="Guiseppi G."/>
            <person name="Guy B.J."/>
            <person name="Haga K."/>
            <person name="Haiech J."/>
            <person name="Harwood C.R."/>
            <person name="Henaut A."/>
            <person name="Hilbert H."/>
            <person name="Holsappel S."/>
            <person name="Hosono S."/>
            <person name="Hullo M.-F."/>
            <person name="Itaya M."/>
            <person name="Jones L.-M."/>
            <person name="Joris B."/>
            <person name="Karamata D."/>
            <person name="Kasahara Y."/>
            <person name="Klaerr-Blanchard M."/>
            <person name="Klein C."/>
            <person name="Kobayashi Y."/>
            <person name="Koetter P."/>
            <person name="Koningstein G."/>
            <person name="Krogh S."/>
            <person name="Kumano M."/>
            <person name="Kurita K."/>
            <person name="Lapidus A."/>
            <person name="Lardinois S."/>
            <person name="Lauber J."/>
            <person name="Lazarevic V."/>
            <person name="Lee S.-M."/>
            <person name="Levine A."/>
            <person name="Liu H."/>
            <person name="Masuda S."/>
            <person name="Mauel C."/>
            <person name="Medigue C."/>
            <person name="Medina N."/>
            <person name="Mellado R.P."/>
            <person name="Mizuno M."/>
            <person name="Moestl D."/>
            <person name="Nakai S."/>
            <person name="Noback M."/>
            <person name="Noone D."/>
            <person name="O'Reilly M."/>
            <person name="Ogawa K."/>
            <person name="Ogiwara A."/>
            <person name="Oudega B."/>
            <person name="Park S.-H."/>
            <person name="Parro V."/>
            <person name="Pohl T.M."/>
            <person name="Portetelle D."/>
            <person name="Porwollik S."/>
            <person name="Prescott A.M."/>
            <person name="Presecan E."/>
            <person name="Pujic P."/>
            <person name="Purnelle B."/>
            <person name="Rapoport G."/>
            <person name="Rey M."/>
            <person name="Reynolds S."/>
            <person name="Rieger M."/>
            <person name="Rivolta C."/>
            <person name="Rocha E."/>
            <person name="Roche B."/>
            <person name="Rose M."/>
            <person name="Sadaie Y."/>
            <person name="Sato T."/>
            <person name="Scanlan E."/>
            <person name="Schleich S."/>
            <person name="Schroeter R."/>
            <person name="Scoffone F."/>
            <person name="Sekiguchi J."/>
            <person name="Sekowska A."/>
            <person name="Seror S.J."/>
            <person name="Serror P."/>
            <person name="Shin B.-S."/>
            <person name="Soldo B."/>
            <person name="Sorokin A."/>
            <person name="Tacconi E."/>
            <person name="Takagi T."/>
            <person name="Takahashi H."/>
            <person name="Takemaru K."/>
            <person name="Takeuchi M."/>
            <person name="Tamakoshi A."/>
            <person name="Tanaka T."/>
            <person name="Terpstra P."/>
            <person name="Tognoni A."/>
            <person name="Tosato V."/>
            <person name="Uchiyama S."/>
            <person name="Vandenbol M."/>
            <person name="Vannier F."/>
            <person name="Vassarotti A."/>
            <person name="Viari A."/>
            <person name="Wambutt R."/>
            <person name="Wedler E."/>
            <person name="Wedler H."/>
            <person name="Weitzenegger T."/>
            <person name="Winters P."/>
            <person name="Wipat A."/>
            <person name="Yamamoto H."/>
            <person name="Yamane K."/>
            <person name="Yasumoto K."/>
            <person name="Yata K."/>
            <person name="Yoshida K."/>
            <person name="Yoshikawa H.-F."/>
            <person name="Zumstein E."/>
            <person name="Yoshikawa H."/>
            <person name="Danchin A."/>
        </authorList>
    </citation>
    <scope>NUCLEOTIDE SEQUENCE [LARGE SCALE GENOMIC DNA]</scope>
    <source>
        <strain>168</strain>
    </source>
</reference>
<reference key="3">
    <citation type="journal article" date="2006" name="Nucleic Acids Res.">
        <title>Crystal structure of Bacillus subtilis TrmB, the tRNA (m7G46) methyltransferase.</title>
        <authorList>
            <person name="Zegers I."/>
            <person name="Gigot D."/>
            <person name="van Vliet F."/>
            <person name="Tricot C."/>
            <person name="Aymerich S."/>
            <person name="Bujnicki J.M."/>
            <person name="Kosinski J."/>
            <person name="Droogmans L."/>
        </authorList>
    </citation>
    <scope>X-RAY CRYSTALLOGRAPHY (2.1 ANGSTROMS)</scope>
    <scope>FUNCTION</scope>
    <scope>CATALYTIC ACTIVITY</scope>
    <scope>PATHWAY</scope>
    <scope>SUBUNIT</scope>
    <source>
        <strain>168</strain>
    </source>
</reference>